<sequence>MAESIIIRVQSPDGVKRITATKRETAATFLKKVAKEFGFQNNGFSVYINRNKTGEITASSNKSLNLLKIKHGDLLFLFPSSLAGPSSEMETSVPPGFKVFGAPNVVEDEIDQYLSKQDGKIYRSRDPQLCRHGPLGKCVHCVPLEPFDEDYLNHLEPPVKHMSFHAYIRKLTGGADKGKFVALENISCKIKSGCEGHLPWPNGICTKCQPSAITLNRQKYRHVDNIMFENHTVADRFLDFWRKTGNQHFGYLYGRYTEHKDIPLGIRAEVAAIYEPPQIGTQNSLELLEDPKAEVVDEIAAKLGLRKVGWIFTDLVSEDTRKGTVRYSRNKDTYFLSSEECITAGDFQNKHPNMCRLSPDGHFGSKFVTAVATGGPDNQVHFEGYQVSNQCMALVRDECLLPCKDAPELGYAKESSSEQYVPDVFYKDVDKFGNEITQLARPLPVEYLIIDITTTFPKDPVYTFSISQNPFPIENRDVLGETQDFHSLATYLSQNTSSVFLDTISDFHLLLFLVTNEVMPLQDSISLLLEAVRTRNEELAQTWKRSEQWATIEQLCSTVGGQLPGLHEYGAVGGSTHTATAAMWACQHCTFMNQPGTGHCEMCSLPRT</sequence>
<reference key="1">
    <citation type="journal article" date="2000" name="DNA Res.">
        <title>Prediction of the coding sequences of unidentified human genes. XVII. The complete sequences of 100 new cDNA clones from brain which code for large proteins in vitro.</title>
        <authorList>
            <person name="Nagase T."/>
            <person name="Kikuno R."/>
            <person name="Ishikawa K."/>
            <person name="Hirosawa M."/>
            <person name="Ohara O."/>
        </authorList>
    </citation>
    <scope>NUCLEOTIDE SEQUENCE [LARGE SCALE MRNA] (ISOFORM 2)</scope>
    <source>
        <tissue>Brain</tissue>
    </source>
</reference>
<reference key="2">
    <citation type="journal article" date="2004" name="Nat. Genet.">
        <title>Complete sequencing and characterization of 21,243 full-length human cDNAs.</title>
        <authorList>
            <person name="Ota T."/>
            <person name="Suzuki Y."/>
            <person name="Nishikawa T."/>
            <person name="Otsuki T."/>
            <person name="Sugiyama T."/>
            <person name="Irie R."/>
            <person name="Wakamatsu A."/>
            <person name="Hayashi K."/>
            <person name="Sato H."/>
            <person name="Nagai K."/>
            <person name="Kimura K."/>
            <person name="Makita H."/>
            <person name="Sekine M."/>
            <person name="Obayashi M."/>
            <person name="Nishi T."/>
            <person name="Shibahara T."/>
            <person name="Tanaka T."/>
            <person name="Ishii S."/>
            <person name="Yamamoto J."/>
            <person name="Saito K."/>
            <person name="Kawai Y."/>
            <person name="Isono Y."/>
            <person name="Nakamura Y."/>
            <person name="Nagahari K."/>
            <person name="Murakami K."/>
            <person name="Yasuda T."/>
            <person name="Iwayanagi T."/>
            <person name="Wagatsuma M."/>
            <person name="Shiratori A."/>
            <person name="Sudo H."/>
            <person name="Hosoiri T."/>
            <person name="Kaku Y."/>
            <person name="Kodaira H."/>
            <person name="Kondo H."/>
            <person name="Sugawara M."/>
            <person name="Takahashi M."/>
            <person name="Kanda K."/>
            <person name="Yokoi T."/>
            <person name="Furuya T."/>
            <person name="Kikkawa E."/>
            <person name="Omura Y."/>
            <person name="Abe K."/>
            <person name="Kamihara K."/>
            <person name="Katsuta N."/>
            <person name="Sato K."/>
            <person name="Tanikawa M."/>
            <person name="Yamazaki M."/>
            <person name="Ninomiya K."/>
            <person name="Ishibashi T."/>
            <person name="Yamashita H."/>
            <person name="Murakawa K."/>
            <person name="Fujimori K."/>
            <person name="Tanai H."/>
            <person name="Kimata M."/>
            <person name="Watanabe M."/>
            <person name="Hiraoka S."/>
            <person name="Chiba Y."/>
            <person name="Ishida S."/>
            <person name="Ono Y."/>
            <person name="Takiguchi S."/>
            <person name="Watanabe S."/>
            <person name="Yosida M."/>
            <person name="Hotuta T."/>
            <person name="Kusano J."/>
            <person name="Kanehori K."/>
            <person name="Takahashi-Fujii A."/>
            <person name="Hara H."/>
            <person name="Tanase T.-O."/>
            <person name="Nomura Y."/>
            <person name="Togiya S."/>
            <person name="Komai F."/>
            <person name="Hara R."/>
            <person name="Takeuchi K."/>
            <person name="Arita M."/>
            <person name="Imose N."/>
            <person name="Musashino K."/>
            <person name="Yuuki H."/>
            <person name="Oshima A."/>
            <person name="Sasaki N."/>
            <person name="Aotsuka S."/>
            <person name="Yoshikawa Y."/>
            <person name="Matsunawa H."/>
            <person name="Ichihara T."/>
            <person name="Shiohata N."/>
            <person name="Sano S."/>
            <person name="Moriya S."/>
            <person name="Momiyama H."/>
            <person name="Satoh N."/>
            <person name="Takami S."/>
            <person name="Terashima Y."/>
            <person name="Suzuki O."/>
            <person name="Nakagawa S."/>
            <person name="Senoh A."/>
            <person name="Mizoguchi H."/>
            <person name="Goto Y."/>
            <person name="Shimizu F."/>
            <person name="Wakebe H."/>
            <person name="Hishigaki H."/>
            <person name="Watanabe T."/>
            <person name="Sugiyama A."/>
            <person name="Takemoto M."/>
            <person name="Kawakami B."/>
            <person name="Yamazaki M."/>
            <person name="Watanabe K."/>
            <person name="Kumagai A."/>
            <person name="Itakura S."/>
            <person name="Fukuzumi Y."/>
            <person name="Fujimori Y."/>
            <person name="Komiyama M."/>
            <person name="Tashiro H."/>
            <person name="Tanigami A."/>
            <person name="Fujiwara T."/>
            <person name="Ono T."/>
            <person name="Yamada K."/>
            <person name="Fujii Y."/>
            <person name="Ozaki K."/>
            <person name="Hirao M."/>
            <person name="Ohmori Y."/>
            <person name="Kawabata A."/>
            <person name="Hikiji T."/>
            <person name="Kobatake N."/>
            <person name="Inagaki H."/>
            <person name="Ikema Y."/>
            <person name="Okamoto S."/>
            <person name="Okitani R."/>
            <person name="Kawakami T."/>
            <person name="Noguchi S."/>
            <person name="Itoh T."/>
            <person name="Shigeta K."/>
            <person name="Senba T."/>
            <person name="Matsumura K."/>
            <person name="Nakajima Y."/>
            <person name="Mizuno T."/>
            <person name="Morinaga M."/>
            <person name="Sasaki M."/>
            <person name="Togashi T."/>
            <person name="Oyama M."/>
            <person name="Hata H."/>
            <person name="Watanabe M."/>
            <person name="Komatsu T."/>
            <person name="Mizushima-Sugano J."/>
            <person name="Satoh T."/>
            <person name="Shirai Y."/>
            <person name="Takahashi Y."/>
            <person name="Nakagawa K."/>
            <person name="Okumura K."/>
            <person name="Nagase T."/>
            <person name="Nomura N."/>
            <person name="Kikuchi H."/>
            <person name="Masuho Y."/>
            <person name="Yamashita R."/>
            <person name="Nakai K."/>
            <person name="Yada T."/>
            <person name="Nakamura Y."/>
            <person name="Ohara O."/>
            <person name="Isogai T."/>
            <person name="Sugano S."/>
        </authorList>
    </citation>
    <scope>NUCLEOTIDE SEQUENCE [LARGE SCALE MRNA] (ISOFORM 1)</scope>
</reference>
<reference key="3">
    <citation type="journal article" date="2004" name="Genome Res.">
        <title>The status, quality, and expansion of the NIH full-length cDNA project: the Mammalian Gene Collection (MGC).</title>
        <authorList>
            <consortium name="The MGC Project Team"/>
        </authorList>
    </citation>
    <scope>NUCLEOTIDE SEQUENCE [LARGE SCALE MRNA]</scope>
    <source>
        <tissue>Pancreas</tissue>
    </source>
</reference>
<reference key="4">
    <citation type="journal article" date="2003" name="Nat. Biotechnol.">
        <title>Exploring proteomes and analyzing protein processing by mass spectrometric identification of sorted N-terminal peptides.</title>
        <authorList>
            <person name="Gevaert K."/>
            <person name="Goethals M."/>
            <person name="Martens L."/>
            <person name="Van Damme J."/>
            <person name="Staes A."/>
            <person name="Thomas G.R."/>
            <person name="Vandekerckhove J."/>
        </authorList>
    </citation>
    <scope>PROTEIN SEQUENCE OF 2-8</scope>
    <source>
        <tissue>Platelet</tissue>
    </source>
</reference>
<reference key="5">
    <citation type="journal article" date="2007" name="BMC Genomics">
        <title>The full-ORF clone resource of the German cDNA consortium.</title>
        <authorList>
            <person name="Bechtel S."/>
            <person name="Rosenfelder H."/>
            <person name="Duda A."/>
            <person name="Schmidt C.P."/>
            <person name="Ernst U."/>
            <person name="Wellenreuther R."/>
            <person name="Mehrle A."/>
            <person name="Schuster C."/>
            <person name="Bahr A."/>
            <person name="Bloecker H."/>
            <person name="Heubner D."/>
            <person name="Hoerlein A."/>
            <person name="Michel G."/>
            <person name="Wedler H."/>
            <person name="Koehrer K."/>
            <person name="Ottenwaelder B."/>
            <person name="Poustka A."/>
            <person name="Wiemann S."/>
            <person name="Schupp I."/>
        </authorList>
    </citation>
    <scope>NUCLEOTIDE SEQUENCE [LARGE SCALE MRNA] OF 90-608</scope>
    <source>
        <tissue>Melanoma</tissue>
    </source>
</reference>
<reference key="6">
    <citation type="journal article" date="2001" name="Gene">
        <title>Cloning and characterization of the gene encoding human NPL4, a protein interacting with the ubiquitin fusion-degradation protein (UFD1L).</title>
        <authorList>
            <person name="Botta A."/>
            <person name="Tandoi C."/>
            <person name="Fini G."/>
            <person name="Calabrese G."/>
            <person name="Dallapiccola B."/>
            <person name="Novelli G."/>
        </authorList>
    </citation>
    <scope>INTERACTION WITH UFD1</scope>
    <scope>TISSUE SPECIFICITY</scope>
</reference>
<reference key="7">
    <citation type="journal article" date="2009" name="Anal. Chem.">
        <title>Lys-N and trypsin cover complementary parts of the phosphoproteome in a refined SCX-based approach.</title>
        <authorList>
            <person name="Gauci S."/>
            <person name="Helbig A.O."/>
            <person name="Slijper M."/>
            <person name="Krijgsveld J."/>
            <person name="Heck A.J."/>
            <person name="Mohammed S."/>
        </authorList>
    </citation>
    <scope>ACETYLATION [LARGE SCALE ANALYSIS] AT ALA-2</scope>
    <scope>CLEAVAGE OF INITIATOR METHIONINE [LARGE SCALE ANALYSIS]</scope>
    <scope>IDENTIFICATION BY MASS SPECTROMETRY [LARGE SCALE ANALYSIS]</scope>
</reference>
<reference key="8">
    <citation type="journal article" date="2011" name="BMC Syst. Biol.">
        <title>Initial characterization of the human central proteome.</title>
        <authorList>
            <person name="Burkard T.R."/>
            <person name="Planyavsky M."/>
            <person name="Kaupe I."/>
            <person name="Breitwieser F.P."/>
            <person name="Buerckstuemmer T."/>
            <person name="Bennett K.L."/>
            <person name="Superti-Furga G."/>
            <person name="Colinge J."/>
        </authorList>
    </citation>
    <scope>IDENTIFICATION BY MASS SPECTROMETRY [LARGE SCALE ANALYSIS]</scope>
</reference>
<reference key="9">
    <citation type="journal article" date="2014" name="Biochem. J.">
        <title>Signal-peptide-mediated translocation is regulated by a p97-AIRAPL complex.</title>
        <authorList>
            <person name="Glinka T."/>
            <person name="Alter J."/>
            <person name="Braunstein I."/>
            <person name="Tzach L."/>
            <person name="Wei Sheng C."/>
            <person name="Geifman S."/>
            <person name="Edelmann M.J."/>
            <person name="Kessler B.M."/>
            <person name="Stanhill A."/>
        </authorList>
    </citation>
    <scope>INTERACTION WITH ZFAND2B</scope>
</reference>
<reference key="10">
    <citation type="journal article" date="2014" name="J. Proteomics">
        <title>An enzyme assisted RP-RPLC approach for in-depth analysis of human liver phosphoproteome.</title>
        <authorList>
            <person name="Bian Y."/>
            <person name="Song C."/>
            <person name="Cheng K."/>
            <person name="Dong M."/>
            <person name="Wang F."/>
            <person name="Huang J."/>
            <person name="Sun D."/>
            <person name="Wang L."/>
            <person name="Ye M."/>
            <person name="Zou H."/>
        </authorList>
    </citation>
    <scope>IDENTIFICATION BY MASS SPECTROMETRY [LARGE SCALE ANALYSIS]</scope>
    <source>
        <tissue>Liver</tissue>
    </source>
</reference>
<reference key="11">
    <citation type="journal article" date="2015" name="EMBO J.">
        <title>A non-canonical role of the p97 complex in RIG-I antiviral signaling.</title>
        <authorList>
            <person name="Hao Q."/>
            <person name="Jiao S."/>
            <person name="Shi Z."/>
            <person name="Li C."/>
            <person name="Meng X."/>
            <person name="Zhang Z."/>
            <person name="Wang Y."/>
            <person name="Song X."/>
            <person name="Wang W."/>
            <person name="Zhang R."/>
            <person name="Zhao Y."/>
            <person name="Wong C.C."/>
            <person name="Zhou Z."/>
        </authorList>
    </citation>
    <scope>FUNCTION</scope>
    <scope>INTERACTION WITH UFD1 AND VCP</scope>
    <scope>MUTAGENESIS OF 6-ILE--ARG-8; ARG-17 AND ARG-50</scope>
</reference>
<protein>
    <recommendedName>
        <fullName>Nuclear protein localization protein 4 homolog</fullName>
        <shortName>Protein NPL4</shortName>
    </recommendedName>
</protein>
<accession>Q8TAT6</accession>
<accession>Q8N3J1</accession>
<accession>Q9H8V2</accession>
<accession>Q9H964</accession>
<accession>Q9NWR5</accession>
<accession>Q9P229</accession>
<proteinExistence type="evidence at protein level"/>
<evidence type="ECO:0000250" key="1">
    <source>
        <dbReference type="UniProtKB" id="P60670"/>
    </source>
</evidence>
<evidence type="ECO:0000250" key="2">
    <source>
        <dbReference type="UniProtKB" id="Q9ES54"/>
    </source>
</evidence>
<evidence type="ECO:0000255" key="3">
    <source>
        <dbReference type="PROSITE-ProRule" id="PRU00322"/>
    </source>
</evidence>
<evidence type="ECO:0000255" key="4">
    <source>
        <dbReference type="PROSITE-ProRule" id="PRU01182"/>
    </source>
</evidence>
<evidence type="ECO:0000269" key="5">
    <source>
    </source>
</evidence>
<evidence type="ECO:0000269" key="6">
    <source>
    </source>
</evidence>
<evidence type="ECO:0000269" key="7">
    <source>
    </source>
</evidence>
<evidence type="ECO:0000269" key="8">
    <source>
    </source>
</evidence>
<evidence type="ECO:0000303" key="9">
    <source>
    </source>
</evidence>
<evidence type="ECO:0000305" key="10"/>
<evidence type="ECO:0007744" key="11">
    <source>
    </source>
</evidence>
<evidence type="ECO:0007829" key="12">
    <source>
        <dbReference type="PDB" id="7WWP"/>
    </source>
</evidence>
<evidence type="ECO:0007829" key="13">
    <source>
        <dbReference type="PDB" id="7WWQ"/>
    </source>
</evidence>
<organism>
    <name type="scientific">Homo sapiens</name>
    <name type="common">Human</name>
    <dbReference type="NCBI Taxonomy" id="9606"/>
    <lineage>
        <taxon>Eukaryota</taxon>
        <taxon>Metazoa</taxon>
        <taxon>Chordata</taxon>
        <taxon>Craniata</taxon>
        <taxon>Vertebrata</taxon>
        <taxon>Euteleostomi</taxon>
        <taxon>Mammalia</taxon>
        <taxon>Eutheria</taxon>
        <taxon>Euarchontoglires</taxon>
        <taxon>Primates</taxon>
        <taxon>Haplorrhini</taxon>
        <taxon>Catarrhini</taxon>
        <taxon>Hominidae</taxon>
        <taxon>Homo</taxon>
    </lineage>
</organism>
<keyword id="KW-0002">3D-structure</keyword>
<keyword id="KW-0007">Acetylation</keyword>
<keyword id="KW-0025">Alternative splicing</keyword>
<keyword id="KW-0143">Chaperone</keyword>
<keyword id="KW-0963">Cytoplasm</keyword>
<keyword id="KW-0903">Direct protein sequencing</keyword>
<keyword id="KW-0256">Endoplasmic reticulum</keyword>
<keyword id="KW-0479">Metal-binding</keyword>
<keyword id="KW-0539">Nucleus</keyword>
<keyword id="KW-1267">Proteomics identification</keyword>
<keyword id="KW-1185">Reference proteome</keyword>
<keyword id="KW-0833">Ubl conjugation pathway</keyword>
<keyword id="KW-0862">Zinc</keyword>
<keyword id="KW-0863">Zinc-finger</keyword>
<feature type="initiator methionine" description="Removed" evidence="6 11">
    <location>
        <position position="1"/>
    </location>
</feature>
<feature type="chain" id="PRO_0000057941" description="Nuclear protein localization protein 4 homolog">
    <location>
        <begin position="2"/>
        <end position="608"/>
    </location>
</feature>
<feature type="domain" description="MPN" evidence="4">
    <location>
        <begin position="226"/>
        <end position="363"/>
    </location>
</feature>
<feature type="zinc finger region" description="RanBP2-type" evidence="3">
    <location>
        <begin position="580"/>
        <end position="608"/>
    </location>
</feature>
<feature type="modified residue" description="N-acetylalanine" evidence="11">
    <location>
        <position position="2"/>
    </location>
</feature>
<feature type="modified residue" description="N6-acetyllysine" evidence="1">
    <location>
        <position position="179"/>
    </location>
</feature>
<feature type="splice variant" id="VSP_009789" description="In isoform 2." evidence="9">
    <original>TVGGQLPGLHEYGAVGGSTHTATAAMWACQHCTFMNQPGTGHCEMCSLPRT</original>
    <variation>EYPHPLPRHPVAGAGEQPTLHSSPLPVVPWIPHPAASWQVPSAMQRVETRPPCQARGRLR</variation>
    <location>
        <begin position="558"/>
        <end position="608"/>
    </location>
</feature>
<feature type="mutagenesis site" description="Abolished interaction with VCP; when associated with A-17 and A-50." evidence="8">
    <original>IIR</original>
    <variation>AIA</variation>
    <location>
        <begin position="6"/>
        <end position="8"/>
    </location>
</feature>
<feature type="mutagenesis site" description="Abolished interaction with VCP; when associated with 6-A--A-8 and A-50." evidence="8">
    <original>R</original>
    <variation>A</variation>
    <location>
        <position position="17"/>
    </location>
</feature>
<feature type="mutagenesis site" description="Abolished interaction with VCP; when associated with 6-A--A-8 and A-17." evidence="8">
    <original>R</original>
    <variation>A</variation>
    <location>
        <position position="50"/>
    </location>
</feature>
<feature type="sequence conflict" description="In Ref. 2; BAB14499." evidence="10" ref="2">
    <original>N</original>
    <variation>S</variation>
    <location>
        <position position="246"/>
    </location>
</feature>
<feature type="sequence conflict" description="In Ref. 2; BAA91314." evidence="10" ref="2">
    <original>H</original>
    <variation>Q</variation>
    <location>
        <position position="248"/>
    </location>
</feature>
<feature type="sequence conflict" description="In Ref. 2; BAA91314." evidence="10" ref="2">
    <original>G</original>
    <variation>E</variation>
    <location>
        <position position="573"/>
    </location>
</feature>
<feature type="sequence conflict" description="In Ref. 2; BAB14499." evidence="10" ref="2">
    <original>M</original>
    <variation>V</variation>
    <location>
        <position position="592"/>
    </location>
</feature>
<feature type="helix" evidence="13">
    <location>
        <begin position="109"/>
        <end position="114"/>
    </location>
</feature>
<feature type="strand" evidence="12">
    <location>
        <begin position="127"/>
        <end position="129"/>
    </location>
</feature>
<feature type="turn" evidence="12">
    <location>
        <begin position="139"/>
        <end position="141"/>
    </location>
</feature>
<feature type="helix" evidence="13">
    <location>
        <begin position="151"/>
        <end position="153"/>
    </location>
</feature>
<feature type="strand" evidence="12">
    <location>
        <begin position="155"/>
        <end position="157"/>
    </location>
</feature>
<feature type="strand" evidence="13">
    <location>
        <begin position="160"/>
        <end position="163"/>
    </location>
</feature>
<feature type="helix" evidence="13">
    <location>
        <begin position="164"/>
        <end position="169"/>
    </location>
</feature>
<feature type="strand" evidence="12">
    <location>
        <begin position="213"/>
        <end position="215"/>
    </location>
</feature>
<feature type="strand" evidence="13">
    <location>
        <begin position="220"/>
        <end position="222"/>
    </location>
</feature>
<feature type="strand" evidence="13">
    <location>
        <begin position="225"/>
        <end position="230"/>
    </location>
</feature>
<feature type="helix" evidence="13">
    <location>
        <begin position="231"/>
        <end position="244"/>
    </location>
</feature>
<feature type="strand" evidence="13">
    <location>
        <begin position="249"/>
        <end position="259"/>
    </location>
</feature>
<feature type="strand" evidence="13">
    <location>
        <begin position="265"/>
        <end position="274"/>
    </location>
</feature>
<feature type="strand" evidence="13">
    <location>
        <begin position="277"/>
        <end position="281"/>
    </location>
</feature>
<feature type="strand" evidence="13">
    <location>
        <begin position="284"/>
        <end position="287"/>
    </location>
</feature>
<feature type="helix" evidence="13">
    <location>
        <begin position="293"/>
        <end position="302"/>
    </location>
</feature>
<feature type="strand" evidence="13">
    <location>
        <begin position="306"/>
        <end position="313"/>
    </location>
</feature>
<feature type="turn" evidence="13">
    <location>
        <begin position="320"/>
        <end position="323"/>
    </location>
</feature>
<feature type="helix" evidence="13">
    <location>
        <begin position="338"/>
        <end position="350"/>
    </location>
</feature>
<feature type="strand" evidence="13">
    <location>
        <begin position="351"/>
        <end position="354"/>
    </location>
</feature>
<feature type="strand" evidence="13">
    <location>
        <begin position="356"/>
        <end position="358"/>
    </location>
</feature>
<feature type="strand" evidence="13">
    <location>
        <begin position="361"/>
        <end position="365"/>
    </location>
</feature>
<feature type="strand" evidence="13">
    <location>
        <begin position="368"/>
        <end position="374"/>
    </location>
</feature>
<feature type="strand" evidence="13">
    <location>
        <begin position="378"/>
        <end position="387"/>
    </location>
</feature>
<feature type="helix" evidence="13">
    <location>
        <begin position="389"/>
        <end position="396"/>
    </location>
</feature>
<feature type="strand" evidence="12">
    <location>
        <begin position="400"/>
        <end position="403"/>
    </location>
</feature>
<feature type="strand" evidence="13">
    <location>
        <begin position="409"/>
        <end position="412"/>
    </location>
</feature>
<feature type="strand" evidence="12">
    <location>
        <begin position="424"/>
        <end position="427"/>
    </location>
</feature>
<feature type="strand" evidence="13">
    <location>
        <begin position="441"/>
        <end position="444"/>
    </location>
</feature>
<feature type="helix" evidence="13">
    <location>
        <begin position="445"/>
        <end position="447"/>
    </location>
</feature>
<feature type="strand" evidence="13">
    <location>
        <begin position="449"/>
        <end position="455"/>
    </location>
</feature>
<feature type="helix" evidence="13">
    <location>
        <begin position="477"/>
        <end position="479"/>
    </location>
</feature>
<feature type="helix" evidence="13">
    <location>
        <begin position="485"/>
        <end position="494"/>
    </location>
</feature>
<feature type="turn" evidence="13">
    <location>
        <begin position="495"/>
        <end position="497"/>
    </location>
</feature>
<feature type="helix" evidence="13">
    <location>
        <begin position="500"/>
        <end position="504"/>
    </location>
</feature>
<feature type="helix" evidence="13">
    <location>
        <begin position="507"/>
        <end position="515"/>
    </location>
</feature>
<feature type="strand" evidence="13">
    <location>
        <begin position="517"/>
        <end position="519"/>
    </location>
</feature>
<feature type="strand" evidence="13">
    <location>
        <begin position="522"/>
        <end position="524"/>
    </location>
</feature>
<feature type="helix" evidence="13">
    <location>
        <begin position="526"/>
        <end position="533"/>
    </location>
</feature>
<feature type="helix" evidence="13">
    <location>
        <begin position="537"/>
        <end position="544"/>
    </location>
</feature>
<feature type="helix" evidence="13">
    <location>
        <begin position="547"/>
        <end position="556"/>
    </location>
</feature>
<comment type="function">
    <text evidence="2 8">The ternary complex containing UFD1, VCP and NPLOC4 binds ubiquitinated proteins and is necessary for the export of misfolded proteins from the ER to the cytoplasm, where they are degraded by the proteasome. The NPLOC4-UFD1-VCP complex regulates spindle disassembly at the end of mitosis and is necessary for the formation of a closed nuclear envelope (By similarity). Acts as a negative regulator of type I interferon production via the complex formed with VCP and UFD1, which binds to RIGI and recruits RNF125 to promote ubiquitination and degradation of RIGI (PubMed:26471729).</text>
</comment>
<comment type="pathway">
    <text>Protein degradation; proteasomal ubiquitin-dependent pathway.</text>
</comment>
<comment type="subunit">
    <text evidence="2 5 7 8">Heterodimer with UFD1 (PubMed:11574150, PubMed:26471729). The heterodimer binds ubiquitinated proteins (By similarity). The heterodimer binds to VCP and inhibits Golgi membrane fusion (PubMed:11574150, PubMed:26471729). Interacts with ZFAND2B; probably through VCP (PubMed:24160817).</text>
</comment>
<comment type="interaction">
    <interactant intactId="EBI-1994109">
        <id>Q8TAT6</id>
    </interactant>
    <interactant intactId="EBI-995350">
        <id>O95786</id>
        <label>RIGI</label>
    </interactant>
    <organismsDiffer>false</organismsDiffer>
    <experiments>6</experiments>
</comment>
<comment type="interaction">
    <interactant intactId="EBI-1994109">
        <id>Q8TAT6</id>
    </interactant>
    <interactant intactId="EBI-296151">
        <id>P37173</id>
        <label>TGFBR2</label>
    </interactant>
    <organismsDiffer>false</organismsDiffer>
    <experiments>3</experiments>
</comment>
<comment type="interaction">
    <interactant intactId="EBI-1994109">
        <id>Q8TAT6</id>
    </interactant>
    <interactant intactId="EBI-719020">
        <id>Q0P6H9</id>
        <label>TMEM62</label>
    </interactant>
    <organismsDiffer>false</organismsDiffer>
    <experiments>2</experiments>
</comment>
<comment type="interaction">
    <interactant intactId="EBI-1994109">
        <id>Q8TAT6</id>
    </interactant>
    <interactant intactId="EBI-3390054">
        <id>P0CG48</id>
        <label>UBC</label>
    </interactant>
    <organismsDiffer>false</organismsDiffer>
    <experiments>2</experiments>
</comment>
<comment type="interaction">
    <interactant intactId="EBI-1994109">
        <id>Q8TAT6</id>
    </interactant>
    <interactant intactId="EBI-1994090">
        <id>Q92890</id>
        <label>UFD1</label>
    </interactant>
    <organismsDiffer>false</organismsDiffer>
    <experiments>10</experiments>
</comment>
<comment type="interaction">
    <interactant intactId="EBI-1994109">
        <id>Q8TAT6</id>
    </interactant>
    <interactant intactId="EBI-355164">
        <id>P55072</id>
        <label>VCP</label>
    </interactant>
    <organismsDiffer>false</organismsDiffer>
    <experiments>15</experiments>
</comment>
<comment type="interaction">
    <interactant intactId="EBI-1994109">
        <id>Q8TAT6</id>
    </interactant>
    <interactant intactId="EBI-6151831">
        <id>Q4G0F5</id>
        <label>VPS26B</label>
    </interactant>
    <organismsDiffer>false</organismsDiffer>
    <experiments>3</experiments>
</comment>
<comment type="subcellular location">
    <subcellularLocation>
        <location evidence="2">Cytoplasm</location>
        <location evidence="2">Cytosol</location>
    </subcellularLocation>
    <subcellularLocation>
        <location evidence="2">Endoplasmic reticulum</location>
    </subcellularLocation>
    <subcellularLocation>
        <location evidence="2">Nucleus</location>
    </subcellularLocation>
    <text evidence="2">Associated with the endoplasmic reticulum and nuclear.</text>
</comment>
<comment type="alternative products">
    <event type="alternative splicing"/>
    <isoform>
        <id>Q8TAT6-1</id>
        <name>1</name>
        <sequence type="displayed"/>
    </isoform>
    <isoform>
        <id>Q8TAT6-2</id>
        <name>2</name>
        <sequence type="described" ref="VSP_009789"/>
    </isoform>
</comment>
<comment type="tissue specificity">
    <text evidence="5">Expressed at highest levels in brain, heart, skeletal muscle, kidney and fetal liver.</text>
</comment>
<comment type="domain">
    <text evidence="2">Binds ubiquitinated proteins via its RanBP2-type zinc finger.</text>
</comment>
<comment type="miscellaneous">
    <molecule>Isoform 2</molecule>
    <text evidence="10">May be due to an intron retention.</text>
</comment>
<comment type="similarity">
    <text evidence="10">Belongs to the NPL4 family.</text>
</comment>
<comment type="sequence caution" evidence="10">
    <conflict type="erroneous initiation">
        <sequence resource="EMBL-CDS" id="BAA91314"/>
    </conflict>
</comment>
<comment type="sequence caution" evidence="10">
    <conflict type="erroneous initiation">
        <sequence resource="EMBL-CDS" id="BAA96023"/>
    </conflict>
</comment>
<comment type="sequence caution" evidence="10">
    <conflict type="erroneous initiation">
        <sequence resource="EMBL-CDS" id="BAB14372"/>
    </conflict>
</comment>
<comment type="sequence caution" evidence="10">
    <conflict type="erroneous initiation">
        <sequence resource="EMBL-CDS" id="BAB14499"/>
    </conflict>
</comment>
<gene>
    <name type="primary">NPLOC4</name>
    <name type="synonym">KIAA1499</name>
    <name type="synonym">NPL4</name>
</gene>
<dbReference type="EMBL" id="AB040932">
    <property type="protein sequence ID" value="BAA96023.1"/>
    <property type="status" value="ALT_INIT"/>
    <property type="molecule type" value="mRNA"/>
</dbReference>
<dbReference type="EMBL" id="AK000664">
    <property type="protein sequence ID" value="BAA91314.1"/>
    <property type="status" value="ALT_INIT"/>
    <property type="molecule type" value="mRNA"/>
</dbReference>
<dbReference type="EMBL" id="AK023046">
    <property type="protein sequence ID" value="BAB14372.1"/>
    <property type="status" value="ALT_INIT"/>
    <property type="molecule type" value="mRNA"/>
</dbReference>
<dbReference type="EMBL" id="AK023272">
    <property type="protein sequence ID" value="BAB14499.1"/>
    <property type="status" value="ALT_INIT"/>
    <property type="molecule type" value="mRNA"/>
</dbReference>
<dbReference type="EMBL" id="BC025930">
    <property type="protein sequence ID" value="AAH25930.1"/>
    <property type="molecule type" value="mRNA"/>
</dbReference>
<dbReference type="EMBL" id="AL834300">
    <property type="protein sequence ID" value="CAD38971.1"/>
    <property type="molecule type" value="mRNA"/>
</dbReference>
<dbReference type="CCDS" id="CCDS45812.1">
    <molecule id="Q8TAT6-1"/>
</dbReference>
<dbReference type="RefSeq" id="NP_060391.2">
    <molecule id="Q8TAT6-1"/>
    <property type="nucleotide sequence ID" value="NM_017921.4"/>
</dbReference>
<dbReference type="RefSeq" id="XP_011523281.1">
    <molecule id="Q8TAT6-2"/>
    <property type="nucleotide sequence ID" value="XM_011524979.2"/>
</dbReference>
<dbReference type="RefSeq" id="XP_054172603.1">
    <molecule id="Q8TAT6-2"/>
    <property type="nucleotide sequence ID" value="XM_054316628.1"/>
</dbReference>
<dbReference type="PDB" id="7WWP">
    <property type="method" value="X-ray"/>
    <property type="resolution" value="2.99 A"/>
    <property type="chains" value="A=91-560"/>
</dbReference>
<dbReference type="PDB" id="7WWQ">
    <property type="method" value="X-ray"/>
    <property type="resolution" value="2.72 A"/>
    <property type="chains" value="A=96-560"/>
</dbReference>
<dbReference type="PDBsum" id="7WWP"/>
<dbReference type="PDBsum" id="7WWQ"/>
<dbReference type="SMR" id="Q8TAT6"/>
<dbReference type="BioGRID" id="120798">
    <property type="interactions" value="225"/>
</dbReference>
<dbReference type="ComplexPortal" id="CPX-137">
    <property type="entry name" value="VCP-NPL4-UFD1 AAA ATPase complex"/>
</dbReference>
<dbReference type="ComplexPortal" id="CPX-8096">
    <property type="entry name" value="VCP-NPL4-UFD1-FAF1 AAA ATPase complex"/>
</dbReference>
<dbReference type="ComplexPortal" id="CPX-8101">
    <property type="entry name" value="VCP-NPL4-UFD1-UBXN7 AAA ATPase complex"/>
</dbReference>
<dbReference type="ComplexPortal" id="CPX-8104">
    <property type="entry name" value="VCP-NPL4-UFD1-FAF2 AAA ATPase complex"/>
</dbReference>
<dbReference type="ComplexPortal" id="CPX-8105">
    <property type="entry name" value="VCP-NPL4-UFD1-UBXN1 AAA ATPase complex"/>
</dbReference>
<dbReference type="CORUM" id="Q8TAT6"/>
<dbReference type="DIP" id="DIP-44059N"/>
<dbReference type="FunCoup" id="Q8TAT6">
    <property type="interactions" value="4089"/>
</dbReference>
<dbReference type="IntAct" id="Q8TAT6">
    <property type="interactions" value="75"/>
</dbReference>
<dbReference type="MINT" id="Q8TAT6"/>
<dbReference type="STRING" id="9606.ENSP00000331487"/>
<dbReference type="TCDB" id="3.A.16.1.1">
    <property type="family name" value="the endoplasmic reticular retrotranslocon (er-rt) family"/>
</dbReference>
<dbReference type="GlyGen" id="Q8TAT6">
    <property type="glycosylation" value="1 site, 1 O-linked glycan (1 site)"/>
</dbReference>
<dbReference type="iPTMnet" id="Q8TAT6"/>
<dbReference type="PhosphoSitePlus" id="Q8TAT6"/>
<dbReference type="SwissPalm" id="Q8TAT6"/>
<dbReference type="BioMuta" id="NPLOC4"/>
<dbReference type="DMDM" id="50428974"/>
<dbReference type="jPOST" id="Q8TAT6"/>
<dbReference type="MassIVE" id="Q8TAT6"/>
<dbReference type="PaxDb" id="9606-ENSP00000331487"/>
<dbReference type="PeptideAtlas" id="Q8TAT6"/>
<dbReference type="ProteomicsDB" id="73917">
    <molecule id="Q8TAT6-1"/>
</dbReference>
<dbReference type="ProteomicsDB" id="73918">
    <molecule id="Q8TAT6-2"/>
</dbReference>
<dbReference type="Pumba" id="Q8TAT6"/>
<dbReference type="Antibodypedia" id="10070">
    <property type="antibodies" value="138 antibodies from 28 providers"/>
</dbReference>
<dbReference type="DNASU" id="55666"/>
<dbReference type="Ensembl" id="ENST00000331134.11">
    <molecule id="Q8TAT6-1"/>
    <property type="protein sequence ID" value="ENSP00000331487.5"/>
    <property type="gene ID" value="ENSG00000182446.15"/>
</dbReference>
<dbReference type="Ensembl" id="ENST00000374747.9">
    <molecule id="Q8TAT6-2"/>
    <property type="protein sequence ID" value="ENSP00000363879.5"/>
    <property type="gene ID" value="ENSG00000182446.15"/>
</dbReference>
<dbReference type="GeneID" id="55666"/>
<dbReference type="KEGG" id="hsa:55666"/>
<dbReference type="MANE-Select" id="ENST00000331134.11">
    <property type="protein sequence ID" value="ENSP00000331487.5"/>
    <property type="RefSeq nucleotide sequence ID" value="NM_017921.4"/>
    <property type="RefSeq protein sequence ID" value="NP_060391.2"/>
</dbReference>
<dbReference type="UCSC" id="uc002kat.5">
    <molecule id="Q8TAT6-1"/>
    <property type="organism name" value="human"/>
</dbReference>
<dbReference type="AGR" id="HGNC:18261"/>
<dbReference type="CTD" id="55666"/>
<dbReference type="DisGeNET" id="55666"/>
<dbReference type="GeneCards" id="NPLOC4"/>
<dbReference type="HGNC" id="HGNC:18261">
    <property type="gene designation" value="NPLOC4"/>
</dbReference>
<dbReference type="HPA" id="ENSG00000182446">
    <property type="expression patterns" value="Tissue enhanced (skeletal)"/>
</dbReference>
<dbReference type="MIM" id="606590">
    <property type="type" value="gene"/>
</dbReference>
<dbReference type="neXtProt" id="NX_Q8TAT6"/>
<dbReference type="OpenTargets" id="ENSG00000182446"/>
<dbReference type="PharmGKB" id="PA143485558"/>
<dbReference type="VEuPathDB" id="HostDB:ENSG00000182446"/>
<dbReference type="eggNOG" id="KOG2834">
    <property type="taxonomic scope" value="Eukaryota"/>
</dbReference>
<dbReference type="GeneTree" id="ENSGT00390000018731"/>
<dbReference type="HOGENOM" id="CLU_017172_2_0_1"/>
<dbReference type="InParanoid" id="Q8TAT6"/>
<dbReference type="OMA" id="KWSRTGR"/>
<dbReference type="OrthoDB" id="10251089at2759"/>
<dbReference type="PAN-GO" id="Q8TAT6">
    <property type="GO annotations" value="4 GO annotations based on evolutionary models"/>
</dbReference>
<dbReference type="PhylomeDB" id="Q8TAT6"/>
<dbReference type="TreeFam" id="TF314173"/>
<dbReference type="PathwayCommons" id="Q8TAT6"/>
<dbReference type="Reactome" id="R-HSA-110320">
    <property type="pathway name" value="Translesion Synthesis by POLH"/>
</dbReference>
<dbReference type="Reactome" id="R-HSA-8951664">
    <property type="pathway name" value="Neddylation"/>
</dbReference>
<dbReference type="Reactome" id="R-HSA-9755511">
    <property type="pathway name" value="KEAP1-NFE2L2 pathway"/>
</dbReference>
<dbReference type="SignaLink" id="Q8TAT6"/>
<dbReference type="SIGNOR" id="Q8TAT6"/>
<dbReference type="UniPathway" id="UPA00144"/>
<dbReference type="BioGRID-ORCS" id="55666">
    <property type="hits" value="808 hits in 1156 CRISPR screens"/>
</dbReference>
<dbReference type="ChiTaRS" id="NPLOC4">
    <property type="organism name" value="human"/>
</dbReference>
<dbReference type="GeneWiki" id="NPLOC4"/>
<dbReference type="GenomeRNAi" id="55666"/>
<dbReference type="Pharos" id="Q8TAT6">
    <property type="development level" value="Tbio"/>
</dbReference>
<dbReference type="PRO" id="PR:Q8TAT6"/>
<dbReference type="Proteomes" id="UP000005640">
    <property type="component" value="Chromosome 17"/>
</dbReference>
<dbReference type="RNAct" id="Q8TAT6">
    <property type="molecule type" value="protein"/>
</dbReference>
<dbReference type="Bgee" id="ENSG00000182446">
    <property type="expression patterns" value="Expressed in gastrocnemius and 196 other cell types or tissues"/>
</dbReference>
<dbReference type="ExpressionAtlas" id="Q8TAT6">
    <property type="expression patterns" value="baseline and differential"/>
</dbReference>
<dbReference type="GO" id="GO:0005829">
    <property type="term" value="C:cytosol"/>
    <property type="evidence" value="ECO:0000304"/>
    <property type="project" value="Reactome"/>
</dbReference>
<dbReference type="GO" id="GO:0005783">
    <property type="term" value="C:endoplasmic reticulum"/>
    <property type="evidence" value="ECO:0000250"/>
    <property type="project" value="HGNC-UCL"/>
</dbReference>
<dbReference type="GO" id="GO:0042175">
    <property type="term" value="C:nuclear outer membrane-endoplasmic reticulum membrane network"/>
    <property type="evidence" value="ECO:0000250"/>
    <property type="project" value="HGNC-UCL"/>
</dbReference>
<dbReference type="GO" id="GO:0005654">
    <property type="term" value="C:nucleoplasm"/>
    <property type="evidence" value="ECO:0000304"/>
    <property type="project" value="Reactome"/>
</dbReference>
<dbReference type="GO" id="GO:0005634">
    <property type="term" value="C:nucleus"/>
    <property type="evidence" value="ECO:0007005"/>
    <property type="project" value="UniProtKB"/>
</dbReference>
<dbReference type="GO" id="GO:0036501">
    <property type="term" value="C:UFD1-NPL4 complex"/>
    <property type="evidence" value="ECO:0000353"/>
    <property type="project" value="ParkinsonsUK-UCL"/>
</dbReference>
<dbReference type="GO" id="GO:0034098">
    <property type="term" value="C:VCP-NPL4-UFD1 AAA ATPase complex"/>
    <property type="evidence" value="ECO:0000314"/>
    <property type="project" value="UniProtKB"/>
</dbReference>
<dbReference type="GO" id="GO:0051117">
    <property type="term" value="F:ATPase binding"/>
    <property type="evidence" value="ECO:0007669"/>
    <property type="project" value="Ensembl"/>
</dbReference>
<dbReference type="GO" id="GO:0036435">
    <property type="term" value="F:K48-linked polyubiquitin modification-dependent protein binding"/>
    <property type="evidence" value="ECO:0007669"/>
    <property type="project" value="Ensembl"/>
</dbReference>
<dbReference type="GO" id="GO:0070530">
    <property type="term" value="F:K63-linked polyubiquitin modification-dependent protein binding"/>
    <property type="evidence" value="ECO:0007669"/>
    <property type="project" value="Ensembl"/>
</dbReference>
<dbReference type="GO" id="GO:0044877">
    <property type="term" value="F:protein-containing complex binding"/>
    <property type="evidence" value="ECO:0007669"/>
    <property type="project" value="Ensembl"/>
</dbReference>
<dbReference type="GO" id="GO:0043130">
    <property type="term" value="F:ubiquitin binding"/>
    <property type="evidence" value="ECO:0000318"/>
    <property type="project" value="GO_Central"/>
</dbReference>
<dbReference type="GO" id="GO:0031625">
    <property type="term" value="F:ubiquitin protein ligase binding"/>
    <property type="evidence" value="ECO:0000318"/>
    <property type="project" value="GO_Central"/>
</dbReference>
<dbReference type="GO" id="GO:0008270">
    <property type="term" value="F:zinc ion binding"/>
    <property type="evidence" value="ECO:0007669"/>
    <property type="project" value="UniProtKB-KW"/>
</dbReference>
<dbReference type="GO" id="GO:0036503">
    <property type="term" value="P:ERAD pathway"/>
    <property type="evidence" value="ECO:0000266"/>
    <property type="project" value="ComplexPortal"/>
</dbReference>
<dbReference type="GO" id="GO:0007030">
    <property type="term" value="P:Golgi organization"/>
    <property type="evidence" value="ECO:0000250"/>
    <property type="project" value="HGNC-UCL"/>
</dbReference>
<dbReference type="GO" id="GO:0039536">
    <property type="term" value="P:negative regulation of RIG-I signaling pathway"/>
    <property type="evidence" value="ECO:0000315"/>
    <property type="project" value="UniProtKB"/>
</dbReference>
<dbReference type="GO" id="GO:0032480">
    <property type="term" value="P:negative regulation of type I interferon production"/>
    <property type="evidence" value="ECO:0000315"/>
    <property type="project" value="UniProtKB"/>
</dbReference>
<dbReference type="GO" id="GO:0043161">
    <property type="term" value="P:proteasome-mediated ubiquitin-dependent protein catabolic process"/>
    <property type="evidence" value="ECO:0007669"/>
    <property type="project" value="UniProtKB-UniPathway"/>
</dbReference>
<dbReference type="GO" id="GO:0030970">
    <property type="term" value="P:retrograde protein transport, ER to cytosol"/>
    <property type="evidence" value="ECO:0000315"/>
    <property type="project" value="ParkinsonsUK-UCL"/>
</dbReference>
<dbReference type="GO" id="GO:0006511">
    <property type="term" value="P:ubiquitin-dependent protein catabolic process"/>
    <property type="evidence" value="ECO:0000315"/>
    <property type="project" value="UniProtKB"/>
</dbReference>
<dbReference type="CDD" id="cd08061">
    <property type="entry name" value="MPN_NPL4"/>
    <property type="match status" value="1"/>
</dbReference>
<dbReference type="FunFam" id="2.30.30.380:FF:000008">
    <property type="entry name" value="nuclear protein localization protein 4 homolog"/>
    <property type="match status" value="1"/>
</dbReference>
<dbReference type="FunFam" id="3.10.20.90:FF:000084">
    <property type="entry name" value="nuclear protein localization protein 4 homolog"/>
    <property type="match status" value="1"/>
</dbReference>
<dbReference type="FunFam" id="3.40.140.10:FF:000012">
    <property type="entry name" value="nuclear protein localization protein 4 homolog"/>
    <property type="match status" value="1"/>
</dbReference>
<dbReference type="Gene3D" id="3.40.140.10">
    <property type="entry name" value="Cytidine Deaminase, domain 2"/>
    <property type="match status" value="1"/>
</dbReference>
<dbReference type="Gene3D" id="3.10.20.90">
    <property type="entry name" value="Phosphatidylinositol 3-kinase Catalytic Subunit, Chain A, domain 1"/>
    <property type="match status" value="1"/>
</dbReference>
<dbReference type="Gene3D" id="2.30.30.380">
    <property type="entry name" value="Zn-finger domain of Sec23/24"/>
    <property type="match status" value="1"/>
</dbReference>
<dbReference type="InterPro" id="IPR037518">
    <property type="entry name" value="MPN"/>
</dbReference>
<dbReference type="InterPro" id="IPR016563">
    <property type="entry name" value="Npl4"/>
</dbReference>
<dbReference type="InterPro" id="IPR007717">
    <property type="entry name" value="NPL4_C"/>
</dbReference>
<dbReference type="InterPro" id="IPR024682">
    <property type="entry name" value="Npl4_Ub-like_dom"/>
</dbReference>
<dbReference type="InterPro" id="IPR007716">
    <property type="entry name" value="NPL4_Zn-bd_put"/>
</dbReference>
<dbReference type="InterPro" id="IPR029071">
    <property type="entry name" value="Ubiquitin-like_domsf"/>
</dbReference>
<dbReference type="InterPro" id="IPR001876">
    <property type="entry name" value="Znf_RanBP2"/>
</dbReference>
<dbReference type="InterPro" id="IPR036443">
    <property type="entry name" value="Znf_RanBP2_sf"/>
</dbReference>
<dbReference type="PANTHER" id="PTHR12710">
    <property type="entry name" value="NUCLEAR PROTEIN LOCALIZATION 4"/>
    <property type="match status" value="1"/>
</dbReference>
<dbReference type="PANTHER" id="PTHR12710:SF0">
    <property type="entry name" value="NUCLEAR PROTEIN LOCALIZATION PROTEIN 4 HOMOLOG"/>
    <property type="match status" value="1"/>
</dbReference>
<dbReference type="Pfam" id="PF05021">
    <property type="entry name" value="NPL4"/>
    <property type="match status" value="1"/>
</dbReference>
<dbReference type="Pfam" id="PF11543">
    <property type="entry name" value="UN_NPL4"/>
    <property type="match status" value="1"/>
</dbReference>
<dbReference type="Pfam" id="PF05020">
    <property type="entry name" value="zf-NPL4"/>
    <property type="match status" value="1"/>
</dbReference>
<dbReference type="PIRSF" id="PIRSF010052">
    <property type="entry name" value="Polyub_prc_Npl4"/>
    <property type="match status" value="1"/>
</dbReference>
<dbReference type="SMART" id="SM00547">
    <property type="entry name" value="ZnF_RBZ"/>
    <property type="match status" value="1"/>
</dbReference>
<dbReference type="SUPFAM" id="SSF90209">
    <property type="entry name" value="Ran binding protein zinc finger-like"/>
    <property type="match status" value="1"/>
</dbReference>
<dbReference type="SUPFAM" id="SSF54236">
    <property type="entry name" value="Ubiquitin-like"/>
    <property type="match status" value="1"/>
</dbReference>
<dbReference type="PROSITE" id="PS50249">
    <property type="entry name" value="MPN"/>
    <property type="match status" value="1"/>
</dbReference>
<dbReference type="PROSITE" id="PS01358">
    <property type="entry name" value="ZF_RANBP2_1"/>
    <property type="match status" value="1"/>
</dbReference>
<dbReference type="PROSITE" id="PS50199">
    <property type="entry name" value="ZF_RANBP2_2"/>
    <property type="match status" value="1"/>
</dbReference>
<name>NPL4_HUMAN</name>